<evidence type="ECO:0000255" key="1"/>
<evidence type="ECO:0000255" key="2">
    <source>
        <dbReference type="PROSITE-ProRule" id="PRU00441"/>
    </source>
</evidence>
<evidence type="ECO:0000269" key="3">
    <source>
    </source>
</evidence>
<evidence type="ECO:0000305" key="4"/>
<protein>
    <recommendedName>
        <fullName>Probable D,D-dipeptide transport system permease protein DdpB</fullName>
    </recommendedName>
</protein>
<gene>
    <name type="primary">ddpB</name>
    <name type="synonym">yddR</name>
    <name type="ordered locus">b1486</name>
    <name type="ordered locus">JW1481</name>
</gene>
<accession>P77308</accession>
<proteinExistence type="evidence at protein level"/>
<keyword id="KW-0997">Cell inner membrane</keyword>
<keyword id="KW-1003">Cell membrane</keyword>
<keyword id="KW-0472">Membrane</keyword>
<keyword id="KW-0571">Peptide transport</keyword>
<keyword id="KW-0653">Protein transport</keyword>
<keyword id="KW-1185">Reference proteome</keyword>
<keyword id="KW-0812">Transmembrane</keyword>
<keyword id="KW-1133">Transmembrane helix</keyword>
<keyword id="KW-0813">Transport</keyword>
<name>DDPB_ECOLI</name>
<dbReference type="EMBL" id="U00096">
    <property type="protein sequence ID" value="AAC74559.1"/>
    <property type="molecule type" value="Genomic_DNA"/>
</dbReference>
<dbReference type="EMBL" id="AP009048">
    <property type="protein sequence ID" value="BAA15141.1"/>
    <property type="molecule type" value="Genomic_DNA"/>
</dbReference>
<dbReference type="PIR" id="A64902">
    <property type="entry name" value="A64902"/>
</dbReference>
<dbReference type="RefSeq" id="NP_416003.1">
    <property type="nucleotide sequence ID" value="NC_000913.3"/>
</dbReference>
<dbReference type="RefSeq" id="WP_000145123.1">
    <property type="nucleotide sequence ID" value="NZ_SSZK01000038.1"/>
</dbReference>
<dbReference type="SMR" id="P77308"/>
<dbReference type="BioGRID" id="4260211">
    <property type="interactions" value="201"/>
</dbReference>
<dbReference type="BioGRID" id="850405">
    <property type="interactions" value="1"/>
</dbReference>
<dbReference type="ComplexPortal" id="CPX-4321">
    <property type="entry name" value="Dipeptide ABC transporter complex"/>
</dbReference>
<dbReference type="DIP" id="DIP-11671N"/>
<dbReference type="FunCoup" id="P77308">
    <property type="interactions" value="208"/>
</dbReference>
<dbReference type="IntAct" id="P77308">
    <property type="interactions" value="2"/>
</dbReference>
<dbReference type="STRING" id="511145.b1486"/>
<dbReference type="TCDB" id="3.A.1.5.38">
    <property type="family name" value="the atp-binding cassette (abc) superfamily"/>
</dbReference>
<dbReference type="PaxDb" id="511145-b1486"/>
<dbReference type="EnsemblBacteria" id="AAC74559">
    <property type="protein sequence ID" value="AAC74559"/>
    <property type="gene ID" value="b1486"/>
</dbReference>
<dbReference type="GeneID" id="946044"/>
<dbReference type="KEGG" id="ecj:JW1481"/>
<dbReference type="KEGG" id="eco:b1486"/>
<dbReference type="KEGG" id="ecoc:C3026_08610"/>
<dbReference type="PATRIC" id="fig|1411691.4.peg.781"/>
<dbReference type="EchoBASE" id="EB3550"/>
<dbReference type="eggNOG" id="COG0601">
    <property type="taxonomic scope" value="Bacteria"/>
</dbReference>
<dbReference type="HOGENOM" id="CLU_036879_0_0_6"/>
<dbReference type="InParanoid" id="P77308"/>
<dbReference type="OMA" id="PDFWMGI"/>
<dbReference type="OrthoDB" id="9805855at2"/>
<dbReference type="PhylomeDB" id="P77308"/>
<dbReference type="BioCyc" id="EcoCyc:YDDR-MONOMER"/>
<dbReference type="PRO" id="PR:P77308"/>
<dbReference type="Proteomes" id="UP000000625">
    <property type="component" value="Chromosome"/>
</dbReference>
<dbReference type="GO" id="GO:0055052">
    <property type="term" value="C:ATP-binding cassette (ABC) transporter complex, substrate-binding subunit-containing"/>
    <property type="evidence" value="ECO:0000303"/>
    <property type="project" value="ComplexPortal"/>
</dbReference>
<dbReference type="GO" id="GO:0016020">
    <property type="term" value="C:membrane"/>
    <property type="evidence" value="ECO:0000303"/>
    <property type="project" value="ComplexPortal"/>
</dbReference>
<dbReference type="GO" id="GO:0005886">
    <property type="term" value="C:plasma membrane"/>
    <property type="evidence" value="ECO:0000314"/>
    <property type="project" value="EcoCyc"/>
</dbReference>
<dbReference type="GO" id="GO:0071916">
    <property type="term" value="F:dipeptide transmembrane transporter activity"/>
    <property type="evidence" value="ECO:0000318"/>
    <property type="project" value="GO_Central"/>
</dbReference>
<dbReference type="GO" id="GO:0042938">
    <property type="term" value="P:dipeptide transport"/>
    <property type="evidence" value="ECO:0000303"/>
    <property type="project" value="ComplexPortal"/>
</dbReference>
<dbReference type="GO" id="GO:0015031">
    <property type="term" value="P:protein transport"/>
    <property type="evidence" value="ECO:0007669"/>
    <property type="project" value="UniProtKB-KW"/>
</dbReference>
<dbReference type="CDD" id="cd06261">
    <property type="entry name" value="TM_PBP2"/>
    <property type="match status" value="1"/>
</dbReference>
<dbReference type="Gene3D" id="1.10.3720.10">
    <property type="entry name" value="MetI-like"/>
    <property type="match status" value="1"/>
</dbReference>
<dbReference type="InterPro" id="IPR045621">
    <property type="entry name" value="BPD_transp_1_N"/>
</dbReference>
<dbReference type="InterPro" id="IPR000515">
    <property type="entry name" value="MetI-like"/>
</dbReference>
<dbReference type="InterPro" id="IPR035906">
    <property type="entry name" value="MetI-like_sf"/>
</dbReference>
<dbReference type="PANTHER" id="PTHR43163:SF8">
    <property type="entry name" value="D,D-DIPEPTIDE TRANSPORT SYSTEM PERMEASE PROTEIN DDPB-RELATED"/>
    <property type="match status" value="1"/>
</dbReference>
<dbReference type="PANTHER" id="PTHR43163">
    <property type="entry name" value="DIPEPTIDE TRANSPORT SYSTEM PERMEASE PROTEIN DPPB-RELATED"/>
    <property type="match status" value="1"/>
</dbReference>
<dbReference type="Pfam" id="PF00528">
    <property type="entry name" value="BPD_transp_1"/>
    <property type="match status" value="1"/>
</dbReference>
<dbReference type="Pfam" id="PF19300">
    <property type="entry name" value="BPD_transp_1_N"/>
    <property type="match status" value="1"/>
</dbReference>
<dbReference type="SUPFAM" id="SSF161098">
    <property type="entry name" value="MetI-like"/>
    <property type="match status" value="1"/>
</dbReference>
<dbReference type="PROSITE" id="PS50928">
    <property type="entry name" value="ABC_TM1"/>
    <property type="match status" value="1"/>
</dbReference>
<sequence length="340" mass="37345">MTFWSILRQRCWGLVLVVAGVCVITFIISHLIPGDPARLLAGDRASDAIVENIRQQLGLDQPLYVQFYRYVSDLFHGDLGTSIRTGRPVLEELRIFFPATLELAFGALLLALLIGIPLGILSAVWRNRWLDHLVRIMAITGISTPAFWLGLGVIVLFYGHLQILPGGGRLDDWLDPPTHVTGFYLLDALLEGNGEVFFNALQHLILPALTLAFVHLGIVARQIRSAMLEQLSEDYIRTARASGLPGWYIVLCYALPNALIPSITVLGLALGDLLYGAVLTETVFAWPGMGAWVVTSIQALDFPAVMGFAVVVSFAYVLVNLVVDLLYLWIDPRIGRGGGE</sequence>
<comment type="function">
    <text>Part of the ABC transporter complex DdpABCDF, which is probably involved in D,D-dipeptide transport. Probably responsible for the translocation of the substrate across the membrane.</text>
</comment>
<comment type="subunit">
    <text evidence="4">The complex is composed of two ATP-binding proteins (DdpD and DdpF), two transmembrane proteins (DdpB and DdpC) and a solute-binding protein (DdpA).</text>
</comment>
<comment type="subcellular location">
    <subcellularLocation>
        <location>Cell inner membrane</location>
        <topology>Multi-pass membrane protein</topology>
    </subcellularLocation>
</comment>
<comment type="induction">
    <text evidence="3">Induced by RpoS in stationary phase.</text>
</comment>
<comment type="similarity">
    <text evidence="4">Belongs to the binding-protein-dependent transport system permease family. OppBC subfamily.</text>
</comment>
<organism>
    <name type="scientific">Escherichia coli (strain K12)</name>
    <dbReference type="NCBI Taxonomy" id="83333"/>
    <lineage>
        <taxon>Bacteria</taxon>
        <taxon>Pseudomonadati</taxon>
        <taxon>Pseudomonadota</taxon>
        <taxon>Gammaproteobacteria</taxon>
        <taxon>Enterobacterales</taxon>
        <taxon>Enterobacteriaceae</taxon>
        <taxon>Escherichia</taxon>
    </lineage>
</organism>
<reference key="1">
    <citation type="journal article" date="1996" name="DNA Res.">
        <title>A 570-kb DNA sequence of the Escherichia coli K-12 genome corresponding to the 28.0-40.1 min region on the linkage map.</title>
        <authorList>
            <person name="Aiba H."/>
            <person name="Baba T."/>
            <person name="Fujita K."/>
            <person name="Hayashi K."/>
            <person name="Inada T."/>
            <person name="Isono K."/>
            <person name="Itoh T."/>
            <person name="Kasai H."/>
            <person name="Kashimoto K."/>
            <person name="Kimura S."/>
            <person name="Kitakawa M."/>
            <person name="Kitagawa M."/>
            <person name="Makino K."/>
            <person name="Miki T."/>
            <person name="Mizobuchi K."/>
            <person name="Mori H."/>
            <person name="Mori T."/>
            <person name="Motomura K."/>
            <person name="Nakade S."/>
            <person name="Nakamura Y."/>
            <person name="Nashimoto H."/>
            <person name="Nishio Y."/>
            <person name="Oshima T."/>
            <person name="Saito N."/>
            <person name="Sampei G."/>
            <person name="Seki Y."/>
            <person name="Sivasundaram S."/>
            <person name="Tagami H."/>
            <person name="Takeda J."/>
            <person name="Takemoto K."/>
            <person name="Takeuchi Y."/>
            <person name="Wada C."/>
            <person name="Yamamoto Y."/>
            <person name="Horiuchi T."/>
        </authorList>
    </citation>
    <scope>NUCLEOTIDE SEQUENCE [LARGE SCALE GENOMIC DNA]</scope>
    <source>
        <strain>K12 / W3110 / ATCC 27325 / DSM 5911</strain>
    </source>
</reference>
<reference key="2">
    <citation type="journal article" date="1997" name="Science">
        <title>The complete genome sequence of Escherichia coli K-12.</title>
        <authorList>
            <person name="Blattner F.R."/>
            <person name="Plunkett G. III"/>
            <person name="Bloch C.A."/>
            <person name="Perna N.T."/>
            <person name="Burland V."/>
            <person name="Riley M."/>
            <person name="Collado-Vides J."/>
            <person name="Glasner J.D."/>
            <person name="Rode C.K."/>
            <person name="Mayhew G.F."/>
            <person name="Gregor J."/>
            <person name="Davis N.W."/>
            <person name="Kirkpatrick H.A."/>
            <person name="Goeden M.A."/>
            <person name="Rose D.J."/>
            <person name="Mau B."/>
            <person name="Shao Y."/>
        </authorList>
    </citation>
    <scope>NUCLEOTIDE SEQUENCE [LARGE SCALE GENOMIC DNA]</scope>
    <source>
        <strain>K12 / MG1655 / ATCC 47076</strain>
    </source>
</reference>
<reference key="3">
    <citation type="journal article" date="2006" name="Mol. Syst. Biol.">
        <title>Highly accurate genome sequences of Escherichia coli K-12 strains MG1655 and W3110.</title>
        <authorList>
            <person name="Hayashi K."/>
            <person name="Morooka N."/>
            <person name="Yamamoto Y."/>
            <person name="Fujita K."/>
            <person name="Isono K."/>
            <person name="Choi S."/>
            <person name="Ohtsubo E."/>
            <person name="Baba T."/>
            <person name="Wanner B.L."/>
            <person name="Mori H."/>
            <person name="Horiuchi T."/>
        </authorList>
    </citation>
    <scope>NUCLEOTIDE SEQUENCE [LARGE SCALE GENOMIC DNA]</scope>
    <source>
        <strain>K12 / W3110 / ATCC 27325 / DSM 5911</strain>
    </source>
</reference>
<reference key="4">
    <citation type="journal article" date="1998" name="Chem. Biol.">
        <title>Homologs of the vancomycin resistance D-Ala-D-Ala dipeptidase VanX in Streptomyces toyocaensis, Escherichia coli and Synechocystis: attributes of catalytic efficiency, stereoselectivity and regulation with implications for function.</title>
        <authorList>
            <person name="Lessard I.A.D."/>
            <person name="Pratt S.D."/>
            <person name="McCafferty D.G."/>
            <person name="Bussiere D.E."/>
            <person name="Hutchins C."/>
            <person name="Wanner B.L."/>
            <person name="Katz L."/>
            <person name="Walsh C.T."/>
        </authorList>
    </citation>
    <scope>INDUCTION</scope>
</reference>
<reference key="5">
    <citation type="journal article" date="1999" name="Proc. Natl. Acad. Sci. U.S.A.">
        <title>VanX, a bacterial D-alanyl-D-alanine dipeptidase: resistance, immunity, or survival function?</title>
        <authorList>
            <person name="Lessard I.A.D."/>
            <person name="Walsh C.T."/>
        </authorList>
    </citation>
    <scope>GENE NAME</scope>
</reference>
<reference key="6">
    <citation type="journal article" date="2005" name="Science">
        <title>Global topology analysis of the Escherichia coli inner membrane proteome.</title>
        <authorList>
            <person name="Daley D.O."/>
            <person name="Rapp M."/>
            <person name="Granseth E."/>
            <person name="Melen K."/>
            <person name="Drew D."/>
            <person name="von Heijne G."/>
        </authorList>
    </citation>
    <scope>TOPOLOGY [LARGE SCALE ANALYSIS]</scope>
    <source>
        <strain>K12 / MG1655 / ATCC 47076</strain>
    </source>
</reference>
<feature type="chain" id="PRO_0000060246" description="Probable D,D-dipeptide transport system permease protein DdpB">
    <location>
        <begin position="1"/>
        <end position="340"/>
    </location>
</feature>
<feature type="topological domain" description="Periplasmic" evidence="1">
    <location>
        <begin position="1"/>
        <end position="11"/>
    </location>
</feature>
<feature type="transmembrane region" description="Helical" evidence="2">
    <location>
        <begin position="12"/>
        <end position="32"/>
    </location>
</feature>
<feature type="topological domain" description="Cytoplasmic" evidence="1">
    <location>
        <begin position="33"/>
        <end position="104"/>
    </location>
</feature>
<feature type="transmembrane region" description="Helical" evidence="2">
    <location>
        <begin position="105"/>
        <end position="125"/>
    </location>
</feature>
<feature type="topological domain" description="Periplasmic" evidence="1">
    <location>
        <begin position="126"/>
        <end position="135"/>
    </location>
</feature>
<feature type="transmembrane region" description="Helical" evidence="2">
    <location>
        <begin position="136"/>
        <end position="156"/>
    </location>
</feature>
<feature type="topological domain" description="Cytoplasmic" evidence="1">
    <location>
        <begin position="157"/>
        <end position="199"/>
    </location>
</feature>
<feature type="transmembrane region" description="Helical" evidence="2">
    <location>
        <begin position="200"/>
        <end position="220"/>
    </location>
</feature>
<feature type="topological domain" description="Periplasmic" evidence="1">
    <location>
        <begin position="221"/>
        <end position="246"/>
    </location>
</feature>
<feature type="transmembrane region" description="Helical" evidence="2">
    <location>
        <begin position="247"/>
        <end position="269"/>
    </location>
</feature>
<feature type="topological domain" description="Cytoplasmic" evidence="1">
    <location>
        <begin position="270"/>
        <end position="279"/>
    </location>
</feature>
<feature type="transmembrane region" description="Helical" evidence="2">
    <location>
        <begin position="280"/>
        <end position="300"/>
    </location>
</feature>
<feature type="topological domain" description="Periplasmic" evidence="1">
    <location>
        <position position="301"/>
    </location>
</feature>
<feature type="transmembrane region" description="Helical" evidence="2">
    <location>
        <begin position="302"/>
        <end position="322"/>
    </location>
</feature>
<feature type="topological domain" description="Cytoplasmic" evidence="1">
    <location>
        <begin position="323"/>
        <end position="340"/>
    </location>
</feature>
<feature type="domain" description="ABC transmembrane type-1" evidence="2">
    <location>
        <begin position="97"/>
        <end position="327"/>
    </location>
</feature>